<protein>
    <recommendedName>
        <fullName>Glandular kallikrein-7, submandibular/renal</fullName>
        <shortName>rGK-7</shortName>
        <ecNumber>3.4.21.35</ecNumber>
    </recommendedName>
    <alternativeName>
        <fullName>Esterase B</fullName>
    </alternativeName>
    <alternativeName>
        <fullName>Kallikrein-related protein K1</fullName>
    </alternativeName>
    <alternativeName>
        <fullName>Proteinase A</fullName>
    </alternativeName>
    <alternativeName>
        <fullName>RSKG-7</fullName>
    </alternativeName>
    <alternativeName>
        <fullName>Tissue kallikrein</fullName>
    </alternativeName>
</protein>
<proteinExistence type="evidence at protein level"/>
<name>KLK7_RAT</name>
<gene>
    <name type="primary">Klk7</name>
    <name type="synonym">Klk-7</name>
</gene>
<sequence>MWFLILFLDLSLGQIDAAPPGQSRVIGGYKCEKNSQPWQVALYSFTKYLCGGVLIDPSWVITAAHCSSNNYQVWLGRNNLLEDEPFAQHRLVSQSFPHPDYKPFLMRNHTRKPGDDHSNDLMLLHLSQPADITDGVKVIDLPTEEPKVGSTCLASGWGSTKPLIWEFPDDLQCVNIHLLSNEKCIKAYKEKVTDLMLCAGELEGGKDTCTGDSGGPLLCDGVLQGITSWGSVPCAKTNMPAIYTKLIKFTSWIKEVMKENP</sequence>
<feature type="signal peptide" evidence="4">
    <location>
        <begin position="1"/>
        <end position="18"/>
    </location>
</feature>
<feature type="propeptide" id="PRO_0000028005" description="Activation peptide" evidence="5 6">
    <location>
        <begin position="19"/>
        <end position="24"/>
    </location>
</feature>
<feature type="chain" id="PRO_0000028006" description="Glandular kallikrein-7, submandibular/renal">
    <location>
        <begin position="25"/>
        <end position="261"/>
    </location>
</feature>
<feature type="domain" description="Peptidase S1" evidence="2">
    <location>
        <begin position="25"/>
        <end position="258"/>
    </location>
</feature>
<feature type="active site" description="Charge relay system">
    <location>
        <position position="65"/>
    </location>
</feature>
<feature type="active site" description="Charge relay system">
    <location>
        <position position="120"/>
    </location>
</feature>
<feature type="active site" description="Charge relay system">
    <location>
        <position position="213"/>
    </location>
</feature>
<feature type="glycosylation site" description="N-linked (GlcNAc...) asparagine" evidence="1">
    <location>
        <position position="108"/>
    </location>
</feature>
<feature type="disulfide bond" evidence="2">
    <location>
        <begin position="31"/>
        <end position="173"/>
    </location>
</feature>
<feature type="disulfide bond" evidence="2">
    <location>
        <begin position="50"/>
        <end position="66"/>
    </location>
</feature>
<feature type="disulfide bond" evidence="2">
    <location>
        <begin position="152"/>
        <end position="219"/>
    </location>
</feature>
<feature type="disulfide bond" evidence="2">
    <location>
        <begin position="184"/>
        <end position="198"/>
    </location>
</feature>
<feature type="disulfide bond" evidence="2">
    <location>
        <begin position="209"/>
        <end position="234"/>
    </location>
</feature>
<feature type="sequence conflict" description="In Ref. 2; AA sequence." evidence="4" ref="2">
    <original>S</original>
    <variation>D</variation>
    <location>
        <position position="35"/>
    </location>
</feature>
<feature type="sequence conflict" description="In Ref. 2; AA sequence and 4; AA sequence." evidence="4" ref="2 4">
    <original>T</original>
    <variation>S</variation>
    <location>
        <position position="46"/>
    </location>
</feature>
<feature type="sequence conflict" description="In Ref. 4; AA sequence." evidence="4" ref="4">
    <original>D</original>
    <variation>A</variation>
    <location>
        <position position="115"/>
    </location>
</feature>
<evidence type="ECO:0000255" key="1"/>
<evidence type="ECO:0000255" key="2">
    <source>
        <dbReference type="PROSITE-ProRule" id="PRU00274"/>
    </source>
</evidence>
<evidence type="ECO:0000269" key="3">
    <source>
    </source>
</evidence>
<evidence type="ECO:0000305" key="4"/>
<evidence type="ECO:0000305" key="5">
    <source>
    </source>
</evidence>
<evidence type="ECO:0000305" key="6">
    <source>
    </source>
</evidence>
<reference key="1">
    <citation type="journal article" date="1988" name="Biochemistry">
        <title>Molecular cloning and characterization of two rat renal kallikrein genes.</title>
        <authorList>
            <person name="Chen Y.-P."/>
            <person name="Chao J."/>
            <person name="Chao L."/>
        </authorList>
    </citation>
    <scope>NUCLEOTIDE SEQUENCE [GENOMIC DNA]</scope>
</reference>
<reference key="2">
    <citation type="journal article" date="1987" name="J. Biochem.">
        <title>Characterization of serine proteinases isolated from rat submaxillary gland: with special reference to the degradation of rat kininogens by these enzymes.</title>
        <authorList>
            <person name="Kato H."/>
            <person name="Nakanishi E."/>
            <person name="Enjyoji K."/>
            <person name="Hayashi I."/>
            <person name="Oh-Ishi S."/>
            <person name="Iwanaga S."/>
        </authorList>
    </citation>
    <scope>PROTEIN SEQUENCE OF 25-75</scope>
    <source>
        <tissue>Submandibular gland</tissue>
    </source>
</reference>
<reference key="3">
    <citation type="journal article" date="1990" name="FEBS Lett.">
        <title>Substrate specificity of two kallikrein family gene products isolated from the rat submaxillary gland.</title>
        <authorList>
            <person name="Elmoujahed A."/>
            <person name="Gutman N."/>
            <person name="Brillard M."/>
            <person name="Gauthier F."/>
        </authorList>
    </citation>
    <scope>PROTEIN SEQUENCE OF 25-36</scope>
    <source>
        <tissue>Submandibular gland</tissue>
    </source>
</reference>
<reference key="4">
    <citation type="journal article" date="1990" name="Arch. Biochem. Biophys.">
        <title>The expression of two kallikrein gene family members in the rat kidney.</title>
        <authorList>
            <person name="Brady J.M."/>
            <person name="MacDonald R.J."/>
        </authorList>
    </citation>
    <scope>PROTEIN SEQUENCE OF 43-261</scope>
    <scope>TISSUE SPECIFICITY</scope>
</reference>
<accession>P36373</accession>
<keyword id="KW-0903">Direct protein sequencing</keyword>
<keyword id="KW-1015">Disulfide bond</keyword>
<keyword id="KW-0325">Glycoprotein</keyword>
<keyword id="KW-0378">Hydrolase</keyword>
<keyword id="KW-0645">Protease</keyword>
<keyword id="KW-1185">Reference proteome</keyword>
<keyword id="KW-0720">Serine protease</keyword>
<keyword id="KW-0732">Signal</keyword>
<keyword id="KW-0865">Zymogen</keyword>
<organism>
    <name type="scientific">Rattus norvegicus</name>
    <name type="common">Rat</name>
    <dbReference type="NCBI Taxonomy" id="10116"/>
    <lineage>
        <taxon>Eukaryota</taxon>
        <taxon>Metazoa</taxon>
        <taxon>Chordata</taxon>
        <taxon>Craniata</taxon>
        <taxon>Vertebrata</taxon>
        <taxon>Euteleostomi</taxon>
        <taxon>Mammalia</taxon>
        <taxon>Eutheria</taxon>
        <taxon>Euarchontoglires</taxon>
        <taxon>Glires</taxon>
        <taxon>Rodentia</taxon>
        <taxon>Myomorpha</taxon>
        <taxon>Muroidea</taxon>
        <taxon>Muridae</taxon>
        <taxon>Murinae</taxon>
        <taxon>Rattus</taxon>
    </lineage>
</organism>
<comment type="function">
    <text>Glandular kallikreins cleave Met-Lys and Arg-Ser bonds in kininogen to release Lys-bradykinin. Predominant kallikrein protein in the kidney.</text>
</comment>
<comment type="catalytic activity">
    <reaction>
        <text>Preferential cleavage of Arg-|-Xaa bonds in small molecule substrates. Highly selective action to release kallidin (lysyl-bradykinin) from kininogen involves hydrolysis of Met-|-Xaa or Leu-|-Xaa.</text>
        <dbReference type="EC" id="3.4.21.35"/>
    </reaction>
</comment>
<comment type="tissue specificity">
    <text evidence="3">Kidney and submandibular gland. Not expressed in liver, pancreas, spleen, parotid, testis, cortex, prostate, ovary and pituitary.</text>
</comment>
<comment type="similarity">
    <text evidence="2">Belongs to the peptidase S1 family. Kallikrein subfamily.</text>
</comment>
<dbReference type="EC" id="3.4.21.35"/>
<dbReference type="EMBL" id="M19647">
    <property type="protein sequence ID" value="AAA41461.1"/>
    <property type="molecule type" value="Genomic_DNA"/>
</dbReference>
<dbReference type="PIR" id="A31136">
    <property type="entry name" value="A31136"/>
</dbReference>
<dbReference type="RefSeq" id="NP_036725.1">
    <property type="nucleotide sequence ID" value="NM_012593.1"/>
</dbReference>
<dbReference type="SMR" id="P36373"/>
<dbReference type="FunCoup" id="P36373">
    <property type="interactions" value="48"/>
</dbReference>
<dbReference type="MEROPS" id="S01.406"/>
<dbReference type="GlyCosmos" id="P36373">
    <property type="glycosylation" value="1 site, No reported glycans"/>
</dbReference>
<dbReference type="GlyGen" id="P36373">
    <property type="glycosylation" value="1 site"/>
</dbReference>
<dbReference type="iPTMnet" id="P36373"/>
<dbReference type="PhosphoSitePlus" id="P36373"/>
<dbReference type="PaxDb" id="10116-ENSRNOP00000066004"/>
<dbReference type="GeneID" id="24523"/>
<dbReference type="KEGG" id="rno:24523"/>
<dbReference type="UCSC" id="RGD:1306420">
    <property type="organism name" value="rat"/>
</dbReference>
<dbReference type="AGR" id="RGD:2969"/>
<dbReference type="CTD" id="3816"/>
<dbReference type="RGD" id="1306420">
    <property type="gene designation" value="Klk7"/>
</dbReference>
<dbReference type="eggNOG" id="KOG3627">
    <property type="taxonomic scope" value="Eukaryota"/>
</dbReference>
<dbReference type="InParanoid" id="P36373"/>
<dbReference type="OrthoDB" id="10061449at2759"/>
<dbReference type="PhylomeDB" id="P36373"/>
<dbReference type="Reactome" id="R-RNO-1592389">
    <property type="pathway name" value="Activation of Matrix Metalloproteinases"/>
</dbReference>
<dbReference type="Reactome" id="R-RNO-381426">
    <property type="pathway name" value="Regulation of Insulin-like Growth Factor (IGF) transport and uptake by Insulin-like Growth Factor Binding Proteins (IGFBPs)"/>
</dbReference>
<dbReference type="PRO" id="PR:P36373"/>
<dbReference type="Proteomes" id="UP000002494">
    <property type="component" value="Unplaced"/>
</dbReference>
<dbReference type="GO" id="GO:0001533">
    <property type="term" value="C:cornified envelope"/>
    <property type="evidence" value="ECO:0000266"/>
    <property type="project" value="RGD"/>
</dbReference>
<dbReference type="GO" id="GO:0097209">
    <property type="term" value="C:epidermal lamellar body"/>
    <property type="evidence" value="ECO:0000266"/>
    <property type="project" value="RGD"/>
</dbReference>
<dbReference type="GO" id="GO:0005615">
    <property type="term" value="C:extracellular space"/>
    <property type="evidence" value="ECO:0000266"/>
    <property type="project" value="RGD"/>
</dbReference>
<dbReference type="GO" id="GO:0030141">
    <property type="term" value="C:secretory granule"/>
    <property type="evidence" value="ECO:0000318"/>
    <property type="project" value="GO_Central"/>
</dbReference>
<dbReference type="GO" id="GO:0008233">
    <property type="term" value="F:peptidase activity"/>
    <property type="evidence" value="ECO:0000266"/>
    <property type="project" value="RGD"/>
</dbReference>
<dbReference type="GO" id="GO:0004252">
    <property type="term" value="F:serine-type endopeptidase activity"/>
    <property type="evidence" value="ECO:0000318"/>
    <property type="project" value="GO_Central"/>
</dbReference>
<dbReference type="GO" id="GO:0002803">
    <property type="term" value="P:positive regulation of antibacterial peptide production"/>
    <property type="evidence" value="ECO:0000266"/>
    <property type="project" value="RGD"/>
</dbReference>
<dbReference type="GO" id="GO:0003073">
    <property type="term" value="P:regulation of systemic arterial blood pressure"/>
    <property type="evidence" value="ECO:0000318"/>
    <property type="project" value="GO_Central"/>
</dbReference>
<dbReference type="GO" id="GO:0031638">
    <property type="term" value="P:zymogen activation"/>
    <property type="evidence" value="ECO:0000318"/>
    <property type="project" value="GO_Central"/>
</dbReference>
<dbReference type="CDD" id="cd00190">
    <property type="entry name" value="Tryp_SPc"/>
    <property type="match status" value="1"/>
</dbReference>
<dbReference type="FunFam" id="2.40.10.10:FF:000032">
    <property type="entry name" value="Kallikrein 1-related peptidase C9"/>
    <property type="match status" value="1"/>
</dbReference>
<dbReference type="FunFam" id="2.40.10.10:FF:000042">
    <property type="entry name" value="Kallikrein 1-related peptidase C9"/>
    <property type="match status" value="1"/>
</dbReference>
<dbReference type="Gene3D" id="2.40.10.10">
    <property type="entry name" value="Trypsin-like serine proteases"/>
    <property type="match status" value="2"/>
</dbReference>
<dbReference type="InterPro" id="IPR009003">
    <property type="entry name" value="Peptidase_S1_PA"/>
</dbReference>
<dbReference type="InterPro" id="IPR043504">
    <property type="entry name" value="Peptidase_S1_PA_chymotrypsin"/>
</dbReference>
<dbReference type="InterPro" id="IPR001314">
    <property type="entry name" value="Peptidase_S1A"/>
</dbReference>
<dbReference type="InterPro" id="IPR001254">
    <property type="entry name" value="Trypsin_dom"/>
</dbReference>
<dbReference type="InterPro" id="IPR018114">
    <property type="entry name" value="TRYPSIN_HIS"/>
</dbReference>
<dbReference type="InterPro" id="IPR033116">
    <property type="entry name" value="TRYPSIN_SER"/>
</dbReference>
<dbReference type="PANTHER" id="PTHR24271:SF47">
    <property type="entry name" value="KALLIKREIN-1"/>
    <property type="match status" value="1"/>
</dbReference>
<dbReference type="PANTHER" id="PTHR24271">
    <property type="entry name" value="KALLIKREIN-RELATED"/>
    <property type="match status" value="1"/>
</dbReference>
<dbReference type="Pfam" id="PF00089">
    <property type="entry name" value="Trypsin"/>
    <property type="match status" value="1"/>
</dbReference>
<dbReference type="PRINTS" id="PR00722">
    <property type="entry name" value="CHYMOTRYPSIN"/>
</dbReference>
<dbReference type="SMART" id="SM00020">
    <property type="entry name" value="Tryp_SPc"/>
    <property type="match status" value="1"/>
</dbReference>
<dbReference type="SUPFAM" id="SSF50494">
    <property type="entry name" value="Trypsin-like serine proteases"/>
    <property type="match status" value="1"/>
</dbReference>
<dbReference type="PROSITE" id="PS50240">
    <property type="entry name" value="TRYPSIN_DOM"/>
    <property type="match status" value="1"/>
</dbReference>
<dbReference type="PROSITE" id="PS00134">
    <property type="entry name" value="TRYPSIN_HIS"/>
    <property type="match status" value="1"/>
</dbReference>
<dbReference type="PROSITE" id="PS00135">
    <property type="entry name" value="TRYPSIN_SER"/>
    <property type="match status" value="1"/>
</dbReference>